<accession>P0A1W0</accession>
<accession>P08522</accession>
<organism>
    <name type="scientific">Salmonella typhimurium (strain LT2 / SGSC1412 / ATCC 700720)</name>
    <dbReference type="NCBI Taxonomy" id="99287"/>
    <lineage>
        <taxon>Bacteria</taxon>
        <taxon>Pseudomonadati</taxon>
        <taxon>Pseudomonadota</taxon>
        <taxon>Gammaproteobacteria</taxon>
        <taxon>Enterobacterales</taxon>
        <taxon>Enterobacteriaceae</taxon>
        <taxon>Salmonella</taxon>
    </lineage>
</organism>
<protein>
    <recommendedName>
        <fullName>pyr operon leader peptide</fullName>
    </recommendedName>
    <alternativeName>
        <fullName>pyrBI operon attenuator</fullName>
    </alternativeName>
</protein>
<proteinExistence type="predicted"/>
<sequence length="33" mass="3797">MVQCVRHSVLPRLKKDAGLPFFFPLKTNTKPLN</sequence>
<gene>
    <name type="primary">pyrL</name>
    <name type="ordered locus">STM4461</name>
</gene>
<name>LPPY_SALTY</name>
<keyword id="KW-0428">Leader peptide</keyword>
<keyword id="KW-0665">Pyrimidine biosynthesis</keyword>
<keyword id="KW-1185">Reference proteome</keyword>
<dbReference type="EMBL" id="X05641">
    <property type="protein sequence ID" value="CAA29128.1"/>
    <property type="molecule type" value="Genomic_DNA"/>
</dbReference>
<dbReference type="EMBL" id="AE006468">
    <property type="protein sequence ID" value="AAL23280.1"/>
    <property type="molecule type" value="Genomic_DNA"/>
</dbReference>
<dbReference type="PIR" id="S00028">
    <property type="entry name" value="LFEBYB"/>
</dbReference>
<dbReference type="RefSeq" id="NP_463321.1">
    <property type="nucleotide sequence ID" value="NC_003197.2"/>
</dbReference>
<dbReference type="RefSeq" id="WP_000249504.1">
    <property type="nucleotide sequence ID" value="NC_003197.2"/>
</dbReference>
<dbReference type="STRING" id="99287.STM4461"/>
<dbReference type="PaxDb" id="99287-STM4461"/>
<dbReference type="GeneID" id="1255987"/>
<dbReference type="KEGG" id="stm:STM4461"/>
<dbReference type="PATRIC" id="fig|99287.12.peg.4694"/>
<dbReference type="HOGENOM" id="CLU_213745_1_0_6"/>
<dbReference type="BioCyc" id="SENT99287:STM4461-MONOMER"/>
<dbReference type="Proteomes" id="UP000001014">
    <property type="component" value="Chromosome"/>
</dbReference>
<dbReference type="GO" id="GO:0019856">
    <property type="term" value="P:pyrimidine nucleobase biosynthetic process"/>
    <property type="evidence" value="ECO:0007669"/>
    <property type="project" value="InterPro"/>
</dbReference>
<dbReference type="GO" id="GO:0006221">
    <property type="term" value="P:pyrimidine nucleotide biosynthetic process"/>
    <property type="evidence" value="ECO:0007669"/>
    <property type="project" value="UniProtKB-KW"/>
</dbReference>
<dbReference type="InterPro" id="IPR012602">
    <property type="entry name" value="PyrBI_leader"/>
</dbReference>
<dbReference type="NCBIfam" id="NF007587">
    <property type="entry name" value="PRK10224.1"/>
    <property type="match status" value="1"/>
</dbReference>
<dbReference type="Pfam" id="PF08052">
    <property type="entry name" value="PyrBI_leader"/>
    <property type="match status" value="1"/>
</dbReference>
<dbReference type="PIRSF" id="PIRSF003249">
    <property type="entry name" value="PyrBI_leader"/>
    <property type="match status" value="1"/>
</dbReference>
<reference key="1">
    <citation type="journal article" date="1987" name="Eur. J. Biochem.">
        <title>Cloning, nucleotide sequence and expression of the pyrBI operon of Salmonella typhimurium LT2.</title>
        <authorList>
            <person name="Michaels G."/>
            <person name="Kelln R.A."/>
            <person name="Nargang F.E."/>
        </authorList>
    </citation>
    <scope>NUCLEOTIDE SEQUENCE [GENOMIC DNA]</scope>
    <source>
        <strain>LT2</strain>
    </source>
</reference>
<reference key="2">
    <citation type="journal article" date="2001" name="Nature">
        <title>Complete genome sequence of Salmonella enterica serovar Typhimurium LT2.</title>
        <authorList>
            <person name="McClelland M."/>
            <person name="Sanderson K.E."/>
            <person name="Spieth J."/>
            <person name="Clifton S.W."/>
            <person name="Latreille P."/>
            <person name="Courtney L."/>
            <person name="Porwollik S."/>
            <person name="Ali J."/>
            <person name="Dante M."/>
            <person name="Du F."/>
            <person name="Hou S."/>
            <person name="Layman D."/>
            <person name="Leonard S."/>
            <person name="Nguyen C."/>
            <person name="Scott K."/>
            <person name="Holmes A."/>
            <person name="Grewal N."/>
            <person name="Mulvaney E."/>
            <person name="Ryan E."/>
            <person name="Sun H."/>
            <person name="Florea L."/>
            <person name="Miller W."/>
            <person name="Stoneking T."/>
            <person name="Nhan M."/>
            <person name="Waterston R."/>
            <person name="Wilson R.K."/>
        </authorList>
    </citation>
    <scope>NUCLEOTIDE SEQUENCE [LARGE SCALE GENOMIC DNA]</scope>
    <source>
        <strain>LT2 / SGSC1412 / ATCC 700720</strain>
    </source>
</reference>
<feature type="peptide" id="PRO_0000044764" description="pyr operon leader peptide">
    <location>
        <begin position="1"/>
        <end position="33"/>
    </location>
</feature>